<gene>
    <name evidence="1" type="primary">obg</name>
    <name type="ordered locus">Csac_1571</name>
</gene>
<name>OBG_CALS8</name>
<proteinExistence type="inferred from homology"/>
<organism>
    <name type="scientific">Caldicellulosiruptor saccharolyticus (strain ATCC 43494 / DSM 8903 / Tp8T 6331)</name>
    <dbReference type="NCBI Taxonomy" id="351627"/>
    <lineage>
        <taxon>Bacteria</taxon>
        <taxon>Bacillati</taxon>
        <taxon>Bacillota</taxon>
        <taxon>Bacillota incertae sedis</taxon>
        <taxon>Caldicellulosiruptorales</taxon>
        <taxon>Caldicellulosiruptoraceae</taxon>
        <taxon>Caldicellulosiruptor</taxon>
    </lineage>
</organism>
<sequence length="427" mass="47306">MFVDIAKIYVKAGDGGDGIVAFRREKYVPAGGPAGGDGGKGGDVIFVADRELNTLLDFKYKRHYKAQNGERGGPNNMHGKDGEDLIIKVPVGTVIKDAETGEIIADLSREGDRAIVAHGGRGGRGNAHFATATRQVPRFAEVGEKGDELWVILELKVLADVGLIGYPNVGKSTFLSVATNARPEIANYPFTTKYPNLGIVYISEGESFVLADIPGLIEGASEGAGLGHQFLRHVERTKVLIHIVDVSGSEGREPVEDFIKINEELKKYSPELAQKPQIVAANKMDLPDAQAYFELFKEEIEKMGYEVYPISAATGMGIREVLKRAYELLKQQKAAENIEEDAKPRTFVYYKKKDVKPLTVRKENGVYVVEGTVVEKVARNIVLNDHDSFRYFQNFLNKLGVFDKLREMGIQDGDIVRILDVEFEYYE</sequence>
<keyword id="KW-0963">Cytoplasm</keyword>
<keyword id="KW-0342">GTP-binding</keyword>
<keyword id="KW-0378">Hydrolase</keyword>
<keyword id="KW-0460">Magnesium</keyword>
<keyword id="KW-0479">Metal-binding</keyword>
<keyword id="KW-0547">Nucleotide-binding</keyword>
<feature type="chain" id="PRO_0000385797" description="GTPase Obg">
    <location>
        <begin position="1"/>
        <end position="427"/>
    </location>
</feature>
<feature type="domain" description="Obg" evidence="3">
    <location>
        <begin position="1"/>
        <end position="158"/>
    </location>
</feature>
<feature type="domain" description="OBG-type G" evidence="1">
    <location>
        <begin position="159"/>
        <end position="330"/>
    </location>
</feature>
<feature type="domain" description="OCT" evidence="2">
    <location>
        <begin position="347"/>
        <end position="427"/>
    </location>
</feature>
<feature type="binding site" evidence="1">
    <location>
        <begin position="165"/>
        <end position="172"/>
    </location>
    <ligand>
        <name>GTP</name>
        <dbReference type="ChEBI" id="CHEBI:37565"/>
    </ligand>
</feature>
<feature type="binding site" evidence="1">
    <location>
        <position position="172"/>
    </location>
    <ligand>
        <name>Mg(2+)</name>
        <dbReference type="ChEBI" id="CHEBI:18420"/>
    </ligand>
</feature>
<feature type="binding site" evidence="1">
    <location>
        <begin position="190"/>
        <end position="194"/>
    </location>
    <ligand>
        <name>GTP</name>
        <dbReference type="ChEBI" id="CHEBI:37565"/>
    </ligand>
</feature>
<feature type="binding site" evidence="1">
    <location>
        <position position="192"/>
    </location>
    <ligand>
        <name>Mg(2+)</name>
        <dbReference type="ChEBI" id="CHEBI:18420"/>
    </ligand>
</feature>
<feature type="binding site" evidence="1">
    <location>
        <begin position="212"/>
        <end position="215"/>
    </location>
    <ligand>
        <name>GTP</name>
        <dbReference type="ChEBI" id="CHEBI:37565"/>
    </ligand>
</feature>
<feature type="binding site" evidence="1">
    <location>
        <begin position="282"/>
        <end position="285"/>
    </location>
    <ligand>
        <name>GTP</name>
        <dbReference type="ChEBI" id="CHEBI:37565"/>
    </ligand>
</feature>
<feature type="binding site" evidence="1">
    <location>
        <begin position="311"/>
        <end position="313"/>
    </location>
    <ligand>
        <name>GTP</name>
        <dbReference type="ChEBI" id="CHEBI:37565"/>
    </ligand>
</feature>
<protein>
    <recommendedName>
        <fullName evidence="1">GTPase Obg</fullName>
        <ecNumber evidence="1">3.6.5.-</ecNumber>
    </recommendedName>
    <alternativeName>
        <fullName evidence="1">GTP-binding protein Obg</fullName>
    </alternativeName>
</protein>
<reference key="1">
    <citation type="submission" date="2007-04" db="EMBL/GenBank/DDBJ databases">
        <title>Genome sequence of the thermophilic hydrogen-producing bacterium Caldicellulosiruptor saccharolyticus DSM 8903.</title>
        <authorList>
            <person name="Copeland A."/>
            <person name="Lucas S."/>
            <person name="Lapidus A."/>
            <person name="Barry K."/>
            <person name="Detter J.C."/>
            <person name="Glavina del Rio T."/>
            <person name="Hammon N."/>
            <person name="Israni S."/>
            <person name="Dalin E."/>
            <person name="Tice H."/>
            <person name="Pitluck S."/>
            <person name="Kiss H."/>
            <person name="Brettin T."/>
            <person name="Bruce D."/>
            <person name="Han C."/>
            <person name="Schmutz J."/>
            <person name="Larimer F."/>
            <person name="Land M."/>
            <person name="Hauser L."/>
            <person name="Kyrpides N."/>
            <person name="Lykidis A."/>
            <person name="van de Werken H.J.G."/>
            <person name="Verhaart M.R.A."/>
            <person name="VanFossen A.L."/>
            <person name="Lewis D.L."/>
            <person name="Nichols J.D."/>
            <person name="Goorissen H.P."/>
            <person name="van Niel E.W.J."/>
            <person name="Stams F.J.M."/>
            <person name="Willquist K.U."/>
            <person name="Ward D.E."/>
            <person name="van der Oost J."/>
            <person name="Kelly R.M."/>
            <person name="Kengen S.M.W."/>
            <person name="Richardson P."/>
        </authorList>
    </citation>
    <scope>NUCLEOTIDE SEQUENCE [LARGE SCALE GENOMIC DNA]</scope>
    <source>
        <strain>ATCC 43494 / DSM 8903 / Tp8T 6331</strain>
    </source>
</reference>
<comment type="function">
    <text evidence="1">An essential GTPase which binds GTP, GDP and possibly (p)ppGpp with moderate affinity, with high nucleotide exchange rates and a fairly low GTP hydrolysis rate. Plays a role in control of the cell cycle, stress response, ribosome biogenesis and in those bacteria that undergo differentiation, in morphogenesis control.</text>
</comment>
<comment type="cofactor">
    <cofactor evidence="1">
        <name>Mg(2+)</name>
        <dbReference type="ChEBI" id="CHEBI:18420"/>
    </cofactor>
</comment>
<comment type="subunit">
    <text evidence="1">Monomer.</text>
</comment>
<comment type="subcellular location">
    <subcellularLocation>
        <location evidence="1">Cytoplasm</location>
    </subcellularLocation>
</comment>
<comment type="similarity">
    <text evidence="1">Belongs to the TRAFAC class OBG-HflX-like GTPase superfamily. OBG GTPase family.</text>
</comment>
<comment type="sequence caution" evidence="4">
    <conflict type="erroneous initiation">
        <sequence resource="EMBL-CDS" id="ABP67163"/>
    </conflict>
    <text>Extended N-terminus.</text>
</comment>
<accession>A4XJS8</accession>
<evidence type="ECO:0000255" key="1">
    <source>
        <dbReference type="HAMAP-Rule" id="MF_01454"/>
    </source>
</evidence>
<evidence type="ECO:0000255" key="2">
    <source>
        <dbReference type="PROSITE-ProRule" id="PRU01229"/>
    </source>
</evidence>
<evidence type="ECO:0000255" key="3">
    <source>
        <dbReference type="PROSITE-ProRule" id="PRU01231"/>
    </source>
</evidence>
<evidence type="ECO:0000305" key="4"/>
<dbReference type="EC" id="3.6.5.-" evidence="1"/>
<dbReference type="EMBL" id="CP000679">
    <property type="protein sequence ID" value="ABP67163.1"/>
    <property type="status" value="ALT_INIT"/>
    <property type="molecule type" value="Genomic_DNA"/>
</dbReference>
<dbReference type="RefSeq" id="WP_041722822.1">
    <property type="nucleotide sequence ID" value="NC_009437.1"/>
</dbReference>
<dbReference type="SMR" id="A4XJS8"/>
<dbReference type="STRING" id="351627.Csac_1571"/>
<dbReference type="KEGG" id="csc:Csac_1571"/>
<dbReference type="eggNOG" id="COG0536">
    <property type="taxonomic scope" value="Bacteria"/>
</dbReference>
<dbReference type="HOGENOM" id="CLU_011747_2_1_9"/>
<dbReference type="OrthoDB" id="9807318at2"/>
<dbReference type="Proteomes" id="UP000000256">
    <property type="component" value="Chromosome"/>
</dbReference>
<dbReference type="GO" id="GO:0005737">
    <property type="term" value="C:cytoplasm"/>
    <property type="evidence" value="ECO:0007669"/>
    <property type="project" value="UniProtKB-SubCell"/>
</dbReference>
<dbReference type="GO" id="GO:0005525">
    <property type="term" value="F:GTP binding"/>
    <property type="evidence" value="ECO:0007669"/>
    <property type="project" value="UniProtKB-UniRule"/>
</dbReference>
<dbReference type="GO" id="GO:0003924">
    <property type="term" value="F:GTPase activity"/>
    <property type="evidence" value="ECO:0007669"/>
    <property type="project" value="UniProtKB-UniRule"/>
</dbReference>
<dbReference type="GO" id="GO:0000287">
    <property type="term" value="F:magnesium ion binding"/>
    <property type="evidence" value="ECO:0007669"/>
    <property type="project" value="InterPro"/>
</dbReference>
<dbReference type="GO" id="GO:0042254">
    <property type="term" value="P:ribosome biogenesis"/>
    <property type="evidence" value="ECO:0007669"/>
    <property type="project" value="UniProtKB-UniRule"/>
</dbReference>
<dbReference type="CDD" id="cd01898">
    <property type="entry name" value="Obg"/>
    <property type="match status" value="1"/>
</dbReference>
<dbReference type="FunFam" id="2.70.210.12:FF:000001">
    <property type="entry name" value="GTPase Obg"/>
    <property type="match status" value="1"/>
</dbReference>
<dbReference type="Gene3D" id="3.30.300.350">
    <property type="entry name" value="GTP-binding protein OBG, C-terminal domain"/>
    <property type="match status" value="1"/>
</dbReference>
<dbReference type="Gene3D" id="2.70.210.12">
    <property type="entry name" value="GTP1/OBG domain"/>
    <property type="match status" value="1"/>
</dbReference>
<dbReference type="Gene3D" id="3.40.50.300">
    <property type="entry name" value="P-loop containing nucleotide triphosphate hydrolases"/>
    <property type="match status" value="1"/>
</dbReference>
<dbReference type="HAMAP" id="MF_01454">
    <property type="entry name" value="GTPase_Obg"/>
    <property type="match status" value="1"/>
</dbReference>
<dbReference type="InterPro" id="IPR031167">
    <property type="entry name" value="G_OBG"/>
</dbReference>
<dbReference type="InterPro" id="IPR006073">
    <property type="entry name" value="GTP-bd"/>
</dbReference>
<dbReference type="InterPro" id="IPR014100">
    <property type="entry name" value="GTP-bd_Obg/CgtA"/>
</dbReference>
<dbReference type="InterPro" id="IPR036346">
    <property type="entry name" value="GTP-bd_prot_GTP1/OBG_C_sf"/>
</dbReference>
<dbReference type="InterPro" id="IPR006074">
    <property type="entry name" value="GTP1-OBG_CS"/>
</dbReference>
<dbReference type="InterPro" id="IPR006169">
    <property type="entry name" value="GTP1_OBG_dom"/>
</dbReference>
<dbReference type="InterPro" id="IPR036726">
    <property type="entry name" value="GTP1_OBG_dom_sf"/>
</dbReference>
<dbReference type="InterPro" id="IPR045086">
    <property type="entry name" value="OBG_GTPase"/>
</dbReference>
<dbReference type="InterPro" id="IPR015349">
    <property type="entry name" value="OCT_dom"/>
</dbReference>
<dbReference type="InterPro" id="IPR027417">
    <property type="entry name" value="P-loop_NTPase"/>
</dbReference>
<dbReference type="NCBIfam" id="TIGR02729">
    <property type="entry name" value="Obg_CgtA"/>
    <property type="match status" value="1"/>
</dbReference>
<dbReference type="NCBIfam" id="TIGR03595">
    <property type="entry name" value="Obg_CgtA_exten"/>
    <property type="match status" value="1"/>
</dbReference>
<dbReference type="NCBIfam" id="NF008954">
    <property type="entry name" value="PRK12296.1"/>
    <property type="match status" value="1"/>
</dbReference>
<dbReference type="NCBIfam" id="NF008955">
    <property type="entry name" value="PRK12297.1"/>
    <property type="match status" value="1"/>
</dbReference>
<dbReference type="NCBIfam" id="NF008956">
    <property type="entry name" value="PRK12299.1"/>
    <property type="match status" value="1"/>
</dbReference>
<dbReference type="PANTHER" id="PTHR11702">
    <property type="entry name" value="DEVELOPMENTALLY REGULATED GTP-BINDING PROTEIN-RELATED"/>
    <property type="match status" value="1"/>
</dbReference>
<dbReference type="PANTHER" id="PTHR11702:SF31">
    <property type="entry name" value="MITOCHONDRIAL RIBOSOME-ASSOCIATED GTPASE 2"/>
    <property type="match status" value="1"/>
</dbReference>
<dbReference type="Pfam" id="PF09269">
    <property type="entry name" value="DUF1967"/>
    <property type="match status" value="1"/>
</dbReference>
<dbReference type="Pfam" id="PF01018">
    <property type="entry name" value="GTP1_OBG"/>
    <property type="match status" value="1"/>
</dbReference>
<dbReference type="Pfam" id="PF01926">
    <property type="entry name" value="MMR_HSR1"/>
    <property type="match status" value="1"/>
</dbReference>
<dbReference type="PIRSF" id="PIRSF002401">
    <property type="entry name" value="GTP_bd_Obg/CgtA"/>
    <property type="match status" value="1"/>
</dbReference>
<dbReference type="PRINTS" id="PR00326">
    <property type="entry name" value="GTP1OBG"/>
</dbReference>
<dbReference type="SUPFAM" id="SSF102741">
    <property type="entry name" value="Obg GTP-binding protein C-terminal domain"/>
    <property type="match status" value="1"/>
</dbReference>
<dbReference type="SUPFAM" id="SSF82051">
    <property type="entry name" value="Obg GTP-binding protein N-terminal domain"/>
    <property type="match status" value="1"/>
</dbReference>
<dbReference type="SUPFAM" id="SSF52540">
    <property type="entry name" value="P-loop containing nucleoside triphosphate hydrolases"/>
    <property type="match status" value="1"/>
</dbReference>
<dbReference type="PROSITE" id="PS51710">
    <property type="entry name" value="G_OBG"/>
    <property type="match status" value="1"/>
</dbReference>
<dbReference type="PROSITE" id="PS00905">
    <property type="entry name" value="GTP1_OBG"/>
    <property type="match status" value="1"/>
</dbReference>
<dbReference type="PROSITE" id="PS51883">
    <property type="entry name" value="OBG"/>
    <property type="match status" value="1"/>
</dbReference>
<dbReference type="PROSITE" id="PS51881">
    <property type="entry name" value="OCT"/>
    <property type="match status" value="1"/>
</dbReference>